<protein>
    <recommendedName>
        <fullName>Drebrin-like protein</fullName>
    </recommendedName>
    <alternativeName>
        <fullName>Cervical SH3P7</fullName>
    </alternativeName>
    <alternativeName>
        <fullName>Cervical mucin-associated protein</fullName>
    </alternativeName>
    <alternativeName>
        <fullName>Drebrin-F</fullName>
    </alternativeName>
    <alternativeName>
        <fullName>HPK1-interacting protein of 55 kDa</fullName>
        <shortName>HIP-55</shortName>
    </alternativeName>
    <alternativeName>
        <fullName>SH3 domain-containing protein 7</fullName>
    </alternativeName>
</protein>
<gene>
    <name type="primary">DBNL</name>
    <name type="synonym">CMAP</name>
    <name type="synonym">SH3P7</name>
    <name type="ORF">PP5423</name>
</gene>
<reference key="1">
    <citation type="journal article" date="1999" name="J. Biol. Chem.">
        <title>A novel src homology 3 domain-containing adaptor protein, HIP-55, that interacts with hematopoietic progenitor kinase 1.</title>
        <authorList>
            <person name="Ensenat D."/>
            <person name="Yao Z."/>
            <person name="Wang X.-S."/>
            <person name="Kori R."/>
            <person name="Zhou G."/>
            <person name="Lee S.C."/>
            <person name="Tan T.-H."/>
        </authorList>
    </citation>
    <scope>NUCLEOTIDE SEQUENCE [MRNA] (ISOFORM 1)</scope>
    <scope>INTERACTION WITH MAP4K1</scope>
</reference>
<reference key="2">
    <citation type="submission" date="1998-07" db="EMBL/GenBank/DDBJ databases">
        <title>Molecular cloning of cDNA encoding drebrin F.</title>
        <authorList>
            <person name="Zhang W."/>
            <person name="Yuan Z."/>
            <person name="Wan T."/>
            <person name="He L."/>
            <person name="Cao X."/>
        </authorList>
    </citation>
    <scope>NUCLEOTIDE SEQUENCE [MRNA] (ISOFORM 1)</scope>
</reference>
<reference key="3">
    <citation type="submission" date="1999-05" db="EMBL/GenBank/DDBJ databases">
        <title>Expression cloning of a novel cervical mucin-associated protein (CMAP).</title>
        <authorList>
            <person name="Toribara N.W."/>
            <person name="Ho S.B."/>
            <person name="Wang R."/>
            <person name="Arthur M."/>
            <person name="Shekels L.L."/>
            <person name="Spurr-Michaud S."/>
            <person name="Keutmann H.T."/>
            <person name="Hill J.A."/>
            <person name="Gipson I.K."/>
        </authorList>
    </citation>
    <scope>NUCLEOTIDE SEQUENCE [MRNA] (ISOFORM 1)</scope>
    <source>
        <tissue>Cervix</tissue>
    </source>
</reference>
<reference key="4">
    <citation type="journal article" date="2004" name="Proc. Natl. Acad. Sci. U.S.A.">
        <title>Large-scale cDNA transfection screening for genes related to cancer development and progression.</title>
        <authorList>
            <person name="Wan D."/>
            <person name="Gong Y."/>
            <person name="Qin W."/>
            <person name="Zhang P."/>
            <person name="Li J."/>
            <person name="Wei L."/>
            <person name="Zhou X."/>
            <person name="Li H."/>
            <person name="Qiu X."/>
            <person name="Zhong F."/>
            <person name="He L."/>
            <person name="Yu J."/>
            <person name="Yao G."/>
            <person name="Jiang H."/>
            <person name="Qian L."/>
            <person name="Yu Y."/>
            <person name="Shu H."/>
            <person name="Chen X."/>
            <person name="Xu H."/>
            <person name="Guo M."/>
            <person name="Pan Z."/>
            <person name="Chen Y."/>
            <person name="Ge C."/>
            <person name="Yang S."/>
            <person name="Gu J."/>
        </authorList>
    </citation>
    <scope>NUCLEOTIDE SEQUENCE [LARGE SCALE MRNA] (ISOFORM 1)</scope>
</reference>
<reference key="5">
    <citation type="journal article" date="2004" name="Nat. Genet.">
        <title>Complete sequencing and characterization of 21,243 full-length human cDNAs.</title>
        <authorList>
            <person name="Ota T."/>
            <person name="Suzuki Y."/>
            <person name="Nishikawa T."/>
            <person name="Otsuki T."/>
            <person name="Sugiyama T."/>
            <person name="Irie R."/>
            <person name="Wakamatsu A."/>
            <person name="Hayashi K."/>
            <person name="Sato H."/>
            <person name="Nagai K."/>
            <person name="Kimura K."/>
            <person name="Makita H."/>
            <person name="Sekine M."/>
            <person name="Obayashi M."/>
            <person name="Nishi T."/>
            <person name="Shibahara T."/>
            <person name="Tanaka T."/>
            <person name="Ishii S."/>
            <person name="Yamamoto J."/>
            <person name="Saito K."/>
            <person name="Kawai Y."/>
            <person name="Isono Y."/>
            <person name="Nakamura Y."/>
            <person name="Nagahari K."/>
            <person name="Murakami K."/>
            <person name="Yasuda T."/>
            <person name="Iwayanagi T."/>
            <person name="Wagatsuma M."/>
            <person name="Shiratori A."/>
            <person name="Sudo H."/>
            <person name="Hosoiri T."/>
            <person name="Kaku Y."/>
            <person name="Kodaira H."/>
            <person name="Kondo H."/>
            <person name="Sugawara M."/>
            <person name="Takahashi M."/>
            <person name="Kanda K."/>
            <person name="Yokoi T."/>
            <person name="Furuya T."/>
            <person name="Kikkawa E."/>
            <person name="Omura Y."/>
            <person name="Abe K."/>
            <person name="Kamihara K."/>
            <person name="Katsuta N."/>
            <person name="Sato K."/>
            <person name="Tanikawa M."/>
            <person name="Yamazaki M."/>
            <person name="Ninomiya K."/>
            <person name="Ishibashi T."/>
            <person name="Yamashita H."/>
            <person name="Murakawa K."/>
            <person name="Fujimori K."/>
            <person name="Tanai H."/>
            <person name="Kimata M."/>
            <person name="Watanabe M."/>
            <person name="Hiraoka S."/>
            <person name="Chiba Y."/>
            <person name="Ishida S."/>
            <person name="Ono Y."/>
            <person name="Takiguchi S."/>
            <person name="Watanabe S."/>
            <person name="Yosida M."/>
            <person name="Hotuta T."/>
            <person name="Kusano J."/>
            <person name="Kanehori K."/>
            <person name="Takahashi-Fujii A."/>
            <person name="Hara H."/>
            <person name="Tanase T.-O."/>
            <person name="Nomura Y."/>
            <person name="Togiya S."/>
            <person name="Komai F."/>
            <person name="Hara R."/>
            <person name="Takeuchi K."/>
            <person name="Arita M."/>
            <person name="Imose N."/>
            <person name="Musashino K."/>
            <person name="Yuuki H."/>
            <person name="Oshima A."/>
            <person name="Sasaki N."/>
            <person name="Aotsuka S."/>
            <person name="Yoshikawa Y."/>
            <person name="Matsunawa H."/>
            <person name="Ichihara T."/>
            <person name="Shiohata N."/>
            <person name="Sano S."/>
            <person name="Moriya S."/>
            <person name="Momiyama H."/>
            <person name="Satoh N."/>
            <person name="Takami S."/>
            <person name="Terashima Y."/>
            <person name="Suzuki O."/>
            <person name="Nakagawa S."/>
            <person name="Senoh A."/>
            <person name="Mizoguchi H."/>
            <person name="Goto Y."/>
            <person name="Shimizu F."/>
            <person name="Wakebe H."/>
            <person name="Hishigaki H."/>
            <person name="Watanabe T."/>
            <person name="Sugiyama A."/>
            <person name="Takemoto M."/>
            <person name="Kawakami B."/>
            <person name="Yamazaki M."/>
            <person name="Watanabe K."/>
            <person name="Kumagai A."/>
            <person name="Itakura S."/>
            <person name="Fukuzumi Y."/>
            <person name="Fujimori Y."/>
            <person name="Komiyama M."/>
            <person name="Tashiro H."/>
            <person name="Tanigami A."/>
            <person name="Fujiwara T."/>
            <person name="Ono T."/>
            <person name="Yamada K."/>
            <person name="Fujii Y."/>
            <person name="Ozaki K."/>
            <person name="Hirao M."/>
            <person name="Ohmori Y."/>
            <person name="Kawabata A."/>
            <person name="Hikiji T."/>
            <person name="Kobatake N."/>
            <person name="Inagaki H."/>
            <person name="Ikema Y."/>
            <person name="Okamoto S."/>
            <person name="Okitani R."/>
            <person name="Kawakami T."/>
            <person name="Noguchi S."/>
            <person name="Itoh T."/>
            <person name="Shigeta K."/>
            <person name="Senba T."/>
            <person name="Matsumura K."/>
            <person name="Nakajima Y."/>
            <person name="Mizuno T."/>
            <person name="Morinaga M."/>
            <person name="Sasaki M."/>
            <person name="Togashi T."/>
            <person name="Oyama M."/>
            <person name="Hata H."/>
            <person name="Watanabe M."/>
            <person name="Komatsu T."/>
            <person name="Mizushima-Sugano J."/>
            <person name="Satoh T."/>
            <person name="Shirai Y."/>
            <person name="Takahashi Y."/>
            <person name="Nakagawa K."/>
            <person name="Okumura K."/>
            <person name="Nagase T."/>
            <person name="Nomura N."/>
            <person name="Kikuchi H."/>
            <person name="Masuho Y."/>
            <person name="Yamashita R."/>
            <person name="Nakai K."/>
            <person name="Yada T."/>
            <person name="Nakamura Y."/>
            <person name="Ohara O."/>
            <person name="Isogai T."/>
            <person name="Sugano S."/>
        </authorList>
    </citation>
    <scope>NUCLEOTIDE SEQUENCE [LARGE SCALE MRNA] (ISOFORMS 3; 5 AND 6)</scope>
    <source>
        <tissue>Cerebellum</tissue>
        <tissue>Mammary gland</tissue>
    </source>
</reference>
<reference key="6">
    <citation type="submission" date="2004-06" db="EMBL/GenBank/DDBJ databases">
        <title>Cloning of human full open reading frames in Gateway(TM) system entry vector (pDONR201).</title>
        <authorList>
            <person name="Ebert L."/>
            <person name="Schick M."/>
            <person name="Neubert P."/>
            <person name="Schatten R."/>
            <person name="Henze S."/>
            <person name="Korn B."/>
        </authorList>
    </citation>
    <scope>NUCLEOTIDE SEQUENCE [LARGE SCALE MRNA] (ISOFORM 1)</scope>
</reference>
<reference key="7">
    <citation type="journal article" date="2003" name="Nature">
        <title>The DNA sequence of human chromosome 7.</title>
        <authorList>
            <person name="Hillier L.W."/>
            <person name="Fulton R.S."/>
            <person name="Fulton L.A."/>
            <person name="Graves T.A."/>
            <person name="Pepin K.H."/>
            <person name="Wagner-McPherson C."/>
            <person name="Layman D."/>
            <person name="Maas J."/>
            <person name="Jaeger S."/>
            <person name="Walker R."/>
            <person name="Wylie K."/>
            <person name="Sekhon M."/>
            <person name="Becker M.C."/>
            <person name="O'Laughlin M.D."/>
            <person name="Schaller M.E."/>
            <person name="Fewell G.A."/>
            <person name="Delehaunty K.D."/>
            <person name="Miner T.L."/>
            <person name="Nash W.E."/>
            <person name="Cordes M."/>
            <person name="Du H."/>
            <person name="Sun H."/>
            <person name="Edwards J."/>
            <person name="Bradshaw-Cordum H."/>
            <person name="Ali J."/>
            <person name="Andrews S."/>
            <person name="Isak A."/>
            <person name="Vanbrunt A."/>
            <person name="Nguyen C."/>
            <person name="Du F."/>
            <person name="Lamar B."/>
            <person name="Courtney L."/>
            <person name="Kalicki J."/>
            <person name="Ozersky P."/>
            <person name="Bielicki L."/>
            <person name="Scott K."/>
            <person name="Holmes A."/>
            <person name="Harkins R."/>
            <person name="Harris A."/>
            <person name="Strong C.M."/>
            <person name="Hou S."/>
            <person name="Tomlinson C."/>
            <person name="Dauphin-Kohlberg S."/>
            <person name="Kozlowicz-Reilly A."/>
            <person name="Leonard S."/>
            <person name="Rohlfing T."/>
            <person name="Rock S.M."/>
            <person name="Tin-Wollam A.-M."/>
            <person name="Abbott A."/>
            <person name="Minx P."/>
            <person name="Maupin R."/>
            <person name="Strowmatt C."/>
            <person name="Latreille P."/>
            <person name="Miller N."/>
            <person name="Johnson D."/>
            <person name="Murray J."/>
            <person name="Woessner J.P."/>
            <person name="Wendl M.C."/>
            <person name="Yang S.-P."/>
            <person name="Schultz B.R."/>
            <person name="Wallis J.W."/>
            <person name="Spieth J."/>
            <person name="Bieri T.A."/>
            <person name="Nelson J.O."/>
            <person name="Berkowicz N."/>
            <person name="Wohldmann P.E."/>
            <person name="Cook L.L."/>
            <person name="Hickenbotham M.T."/>
            <person name="Eldred J."/>
            <person name="Williams D."/>
            <person name="Bedell J.A."/>
            <person name="Mardis E.R."/>
            <person name="Clifton S.W."/>
            <person name="Chissoe S.L."/>
            <person name="Marra M.A."/>
            <person name="Raymond C."/>
            <person name="Haugen E."/>
            <person name="Gillett W."/>
            <person name="Zhou Y."/>
            <person name="James R."/>
            <person name="Phelps K."/>
            <person name="Iadanoto S."/>
            <person name="Bubb K."/>
            <person name="Simms E."/>
            <person name="Levy R."/>
            <person name="Clendenning J."/>
            <person name="Kaul R."/>
            <person name="Kent W.J."/>
            <person name="Furey T.S."/>
            <person name="Baertsch R.A."/>
            <person name="Brent M.R."/>
            <person name="Keibler E."/>
            <person name="Flicek P."/>
            <person name="Bork P."/>
            <person name="Suyama M."/>
            <person name="Bailey J.A."/>
            <person name="Portnoy M.E."/>
            <person name="Torrents D."/>
            <person name="Chinwalla A.T."/>
            <person name="Gish W.R."/>
            <person name="Eddy S.R."/>
            <person name="McPherson J.D."/>
            <person name="Olson M.V."/>
            <person name="Eichler E.E."/>
            <person name="Green E.D."/>
            <person name="Waterston R.H."/>
            <person name="Wilson R.K."/>
        </authorList>
    </citation>
    <scope>NUCLEOTIDE SEQUENCE [LARGE SCALE GENOMIC DNA]</scope>
</reference>
<reference key="8">
    <citation type="journal article" date="2003" name="Science">
        <title>Human chromosome 7: DNA sequence and biology.</title>
        <authorList>
            <person name="Scherer S.W."/>
            <person name="Cheung J."/>
            <person name="MacDonald J.R."/>
            <person name="Osborne L.R."/>
            <person name="Nakabayashi K."/>
            <person name="Herbrick J.-A."/>
            <person name="Carson A.R."/>
            <person name="Parker-Katiraee L."/>
            <person name="Skaug J."/>
            <person name="Khaja R."/>
            <person name="Zhang J."/>
            <person name="Hudek A.K."/>
            <person name="Li M."/>
            <person name="Haddad M."/>
            <person name="Duggan G.E."/>
            <person name="Fernandez B.A."/>
            <person name="Kanematsu E."/>
            <person name="Gentles S."/>
            <person name="Christopoulos C.C."/>
            <person name="Choufani S."/>
            <person name="Kwasnicka D."/>
            <person name="Zheng X.H."/>
            <person name="Lai Z."/>
            <person name="Nusskern D.R."/>
            <person name="Zhang Q."/>
            <person name="Gu Z."/>
            <person name="Lu F."/>
            <person name="Zeesman S."/>
            <person name="Nowaczyk M.J."/>
            <person name="Teshima I."/>
            <person name="Chitayat D."/>
            <person name="Shuman C."/>
            <person name="Weksberg R."/>
            <person name="Zackai E.H."/>
            <person name="Grebe T.A."/>
            <person name="Cox S.R."/>
            <person name="Kirkpatrick S.J."/>
            <person name="Rahman N."/>
            <person name="Friedman J.M."/>
            <person name="Heng H.H.Q."/>
            <person name="Pelicci P.G."/>
            <person name="Lo-Coco F."/>
            <person name="Belloni E."/>
            <person name="Shaffer L.G."/>
            <person name="Pober B."/>
            <person name="Morton C.C."/>
            <person name="Gusella J.F."/>
            <person name="Bruns G.A.P."/>
            <person name="Korf B.R."/>
            <person name="Quade B.J."/>
            <person name="Ligon A.H."/>
            <person name="Ferguson H."/>
            <person name="Higgins A.W."/>
            <person name="Leach N.T."/>
            <person name="Herrick S.R."/>
            <person name="Lemyre E."/>
            <person name="Farra C.G."/>
            <person name="Kim H.-G."/>
            <person name="Summers A.M."/>
            <person name="Gripp K.W."/>
            <person name="Roberts W."/>
            <person name="Szatmari P."/>
            <person name="Winsor E.J.T."/>
            <person name="Grzeschik K.-H."/>
            <person name="Teebi A."/>
            <person name="Minassian B.A."/>
            <person name="Kere J."/>
            <person name="Armengol L."/>
            <person name="Pujana M.A."/>
            <person name="Estivill X."/>
            <person name="Wilson M.D."/>
            <person name="Koop B.F."/>
            <person name="Tosi S."/>
            <person name="Moore G.E."/>
            <person name="Boright A.P."/>
            <person name="Zlotorynski E."/>
            <person name="Kerem B."/>
            <person name="Kroisel P.M."/>
            <person name="Petek E."/>
            <person name="Oscier D.G."/>
            <person name="Mould S.J."/>
            <person name="Doehner H."/>
            <person name="Doehner K."/>
            <person name="Rommens J.M."/>
            <person name="Vincent J.B."/>
            <person name="Venter J.C."/>
            <person name="Li P.W."/>
            <person name="Mural R.J."/>
            <person name="Adams M.D."/>
            <person name="Tsui L.-C."/>
        </authorList>
    </citation>
    <scope>NUCLEOTIDE SEQUENCE [LARGE SCALE GENOMIC DNA]</scope>
</reference>
<reference key="9">
    <citation type="submission" date="2005-09" db="EMBL/GenBank/DDBJ databases">
        <authorList>
            <person name="Mural R.J."/>
            <person name="Istrail S."/>
            <person name="Sutton G.G."/>
            <person name="Florea L."/>
            <person name="Halpern A.L."/>
            <person name="Mobarry C.M."/>
            <person name="Lippert R."/>
            <person name="Walenz B."/>
            <person name="Shatkay H."/>
            <person name="Dew I."/>
            <person name="Miller J.R."/>
            <person name="Flanigan M.J."/>
            <person name="Edwards N.J."/>
            <person name="Bolanos R."/>
            <person name="Fasulo D."/>
            <person name="Halldorsson B.V."/>
            <person name="Hannenhalli S."/>
            <person name="Turner R."/>
            <person name="Yooseph S."/>
            <person name="Lu F."/>
            <person name="Nusskern D.R."/>
            <person name="Shue B.C."/>
            <person name="Zheng X.H."/>
            <person name="Zhong F."/>
            <person name="Delcher A.L."/>
            <person name="Huson D.H."/>
            <person name="Kravitz S.A."/>
            <person name="Mouchard L."/>
            <person name="Reinert K."/>
            <person name="Remington K.A."/>
            <person name="Clark A.G."/>
            <person name="Waterman M.S."/>
            <person name="Eichler E.E."/>
            <person name="Adams M.D."/>
            <person name="Hunkapiller M.W."/>
            <person name="Myers E.W."/>
            <person name="Venter J.C."/>
        </authorList>
    </citation>
    <scope>NUCLEOTIDE SEQUENCE [LARGE SCALE GENOMIC DNA]</scope>
</reference>
<reference key="10">
    <citation type="journal article" date="2004" name="Genome Res.">
        <title>The status, quality, and expansion of the NIH full-length cDNA project: the Mammalian Gene Collection (MGC).</title>
        <authorList>
            <consortium name="The MGC Project Team"/>
        </authorList>
    </citation>
    <scope>NUCLEOTIDE SEQUENCE [LARGE SCALE MRNA] (ISOFORMS 1 AND 2)</scope>
    <source>
        <tissue>Brain</tissue>
        <tissue>Eye</tissue>
    </source>
</reference>
<reference key="11">
    <citation type="journal article" date="1999" name="Mol. Cell. Biol.">
        <title>SH3P7 is a cytoskeleton adapter protein and is coupled to signal transduction from lymphocyte antigen receptors.</title>
        <authorList>
            <person name="Larbolette O."/>
            <person name="Wollscheid B."/>
            <person name="Schweikert J."/>
            <person name="Nielsen P.J."/>
            <person name="Wienands J."/>
        </authorList>
    </citation>
    <scope>IDENTIFICATION</scope>
</reference>
<reference key="12">
    <citation type="journal article" date="2001" name="Biochem. Biophys. Res. Commun.">
        <title>Caspase-mediated cleavage of actin-binding and SH3-domain-containing proteins cortactin, HS1, and HIP-55 during apoptosis.</title>
        <authorList>
            <person name="Chen Y.-R."/>
            <person name="Kori R."/>
            <person name="John B."/>
            <person name="Tan T.-H."/>
        </authorList>
    </citation>
    <scope>DEGRADATION BY CASPASES</scope>
</reference>
<reference key="13">
    <citation type="journal article" date="2004" name="Anal. Chem.">
        <title>Robust phosphoproteomic profiling of tyrosine phosphorylation sites from human T cells using immobilized metal affinity chromatography and tandem mass spectrometry.</title>
        <authorList>
            <person name="Brill L.M."/>
            <person name="Salomon A.R."/>
            <person name="Ficarro S.B."/>
            <person name="Mukherji M."/>
            <person name="Stettler-Gill M."/>
            <person name="Peters E.C."/>
        </authorList>
    </citation>
    <scope>PHOSPHORYLATION [LARGE SCALE ANALYSIS] AT SER-283</scope>
    <scope>IDENTIFICATION BY MASS SPECTROMETRY [LARGE SCALE ANALYSIS]</scope>
    <source>
        <tissue>Leukemic T-cell</tissue>
    </source>
</reference>
<reference key="14">
    <citation type="journal article" date="2004" name="J. Biol. Chem.">
        <title>Recruitment of the actin-binding protein HIP-55 to the immunological synapse regulates T cell receptor signaling and endocytosis.</title>
        <authorList>
            <person name="Le Bras S."/>
            <person name="Foucault I."/>
            <person name="Foussat A."/>
            <person name="Brignone C."/>
            <person name="Acuto O."/>
            <person name="Deckert M."/>
        </authorList>
    </citation>
    <scope>FUNCTION</scope>
    <scope>SUBCELLULAR LOCATION</scope>
</reference>
<reference key="15">
    <citation type="journal article" date="2005" name="J. Biol. Chem.">
        <title>PRAM-1 potentiates arsenic trioxide-induced JNK activation.</title>
        <authorList>
            <person name="Denis F.M."/>
            <person name="Benecke A."/>
            <person name="Di Gioia Y."/>
            <person name="Touw I.P."/>
            <person name="Cayre Y.E."/>
            <person name="Lutz P.G."/>
        </authorList>
    </citation>
    <scope>INTERACTION WITH PRAM1</scope>
    <scope>CLEAVAGE BY CASPASES</scope>
    <scope>MUTAGENESIS OF ASP-361</scope>
</reference>
<reference key="16">
    <citation type="journal article" date="2005" name="Nat. Biotechnol.">
        <title>Immunoaffinity profiling of tyrosine phosphorylation in cancer cells.</title>
        <authorList>
            <person name="Rush J."/>
            <person name="Moritz A."/>
            <person name="Lee K.A."/>
            <person name="Guo A."/>
            <person name="Goss V.L."/>
            <person name="Spek E.J."/>
            <person name="Zhang H."/>
            <person name="Zha X.-M."/>
            <person name="Polakiewicz R.D."/>
            <person name="Comb M.J."/>
        </authorList>
    </citation>
    <scope>IDENTIFICATION BY MASS SPECTROMETRY [LARGE SCALE ANALYSIS]</scope>
</reference>
<reference key="17">
    <citation type="journal article" date="2006" name="Cell">
        <title>Global, in vivo, and site-specific phosphorylation dynamics in signaling networks.</title>
        <authorList>
            <person name="Olsen J.V."/>
            <person name="Blagoev B."/>
            <person name="Gnad F."/>
            <person name="Macek B."/>
            <person name="Kumar C."/>
            <person name="Mortensen P."/>
            <person name="Mann M."/>
        </authorList>
    </citation>
    <scope>PHOSPHORYLATION [LARGE SCALE ANALYSIS] AT SER-283</scope>
    <scope>IDENTIFICATION BY MASS SPECTROMETRY [LARGE SCALE ANALYSIS]</scope>
    <source>
        <tissue>Cervix carcinoma</tissue>
    </source>
</reference>
<reference key="18">
    <citation type="journal article" date="2006" name="Nat. Biotechnol.">
        <title>A probability-based approach for high-throughput protein phosphorylation analysis and site localization.</title>
        <authorList>
            <person name="Beausoleil S.A."/>
            <person name="Villen J."/>
            <person name="Gerber S.A."/>
            <person name="Rush J."/>
            <person name="Gygi S.P."/>
        </authorList>
    </citation>
    <scope>PHOSPHORYLATION [LARGE SCALE ANALYSIS] AT SER-232</scope>
    <scope>PHOSPHORYLATION [LARGE SCALE ANALYSIS] AT SER-232 (ISOFORMS 2 AND 3)</scope>
    <scope>PHOSPHORYLATION [LARGE SCALE ANALYSIS] AT SER-137 (ISOFORM 4)</scope>
    <scope>PHOSPHORYLATION [LARGE SCALE ANALYSIS] AT SER-183 (ISOFORM 6)</scope>
    <scope>IDENTIFICATION BY MASS SPECTROMETRY [LARGE SCALE ANALYSIS]</scope>
    <source>
        <tissue>Cervix carcinoma</tissue>
    </source>
</reference>
<reference key="19">
    <citation type="journal article" date="2008" name="J. Proteome Res.">
        <title>Phosphoproteome of resting human platelets.</title>
        <authorList>
            <person name="Zahedi R.P."/>
            <person name="Lewandrowski U."/>
            <person name="Wiesner J."/>
            <person name="Wortelkamp S."/>
            <person name="Moebius J."/>
            <person name="Schuetz C."/>
            <person name="Walter U."/>
            <person name="Gambaryan S."/>
            <person name="Sickmann A."/>
        </authorList>
    </citation>
    <scope>PHOSPHORYLATION [LARGE SCALE ANALYSIS] AT SER-232</scope>
    <scope>IDENTIFICATION BY MASS SPECTROMETRY [LARGE SCALE ANALYSIS]</scope>
    <source>
        <tissue>Platelet</tissue>
    </source>
</reference>
<reference key="20">
    <citation type="journal article" date="2008" name="Proc. Natl. Acad. Sci. U.S.A.">
        <title>A quantitative atlas of mitotic phosphorylation.</title>
        <authorList>
            <person name="Dephoure N."/>
            <person name="Zhou C."/>
            <person name="Villen J."/>
            <person name="Beausoleil S.A."/>
            <person name="Bakalarski C.E."/>
            <person name="Elledge S.J."/>
            <person name="Gygi S.P."/>
        </authorList>
    </citation>
    <scope>PHOSPHORYLATION [LARGE SCALE ANALYSIS] AT SER-232 AND SER-269</scope>
    <scope>IDENTIFICATION BY MASS SPECTROMETRY [LARGE SCALE ANALYSIS]</scope>
    <source>
        <tissue>Cervix carcinoma</tissue>
    </source>
</reference>
<reference key="21">
    <citation type="journal article" date="2009" name="Anal. Chem.">
        <title>Lys-N and trypsin cover complementary parts of the phosphoproteome in a refined SCX-based approach.</title>
        <authorList>
            <person name="Gauci S."/>
            <person name="Helbig A.O."/>
            <person name="Slijper M."/>
            <person name="Krijgsveld J."/>
            <person name="Heck A.J."/>
            <person name="Mohammed S."/>
        </authorList>
    </citation>
    <scope>IDENTIFICATION BY MASS SPECTROMETRY [LARGE SCALE ANALYSIS]</scope>
</reference>
<reference key="22">
    <citation type="journal article" date="2009" name="Sci. Signal.">
        <title>Quantitative phosphoproteomic analysis of T cell receptor signaling reveals system-wide modulation of protein-protein interactions.</title>
        <authorList>
            <person name="Mayya V."/>
            <person name="Lundgren D.H."/>
            <person name="Hwang S.-I."/>
            <person name="Rezaul K."/>
            <person name="Wu L."/>
            <person name="Eng J.K."/>
            <person name="Rodionov V."/>
            <person name="Han D.K."/>
        </authorList>
    </citation>
    <scope>PHOSPHORYLATION [LARGE SCALE ANALYSIS] AT SER-232 AND SER-269</scope>
    <scope>IDENTIFICATION BY MASS SPECTROMETRY [LARGE SCALE ANALYSIS]</scope>
    <source>
        <tissue>Leukemic T-cell</tissue>
    </source>
</reference>
<reference key="23">
    <citation type="journal article" date="2009" name="Science">
        <title>Lysine acetylation targets protein complexes and co-regulates major cellular functions.</title>
        <authorList>
            <person name="Choudhary C."/>
            <person name="Kumar C."/>
            <person name="Gnad F."/>
            <person name="Nielsen M.L."/>
            <person name="Rehman M."/>
            <person name="Walther T.C."/>
            <person name="Olsen J.V."/>
            <person name="Mann M."/>
        </authorList>
    </citation>
    <scope>ACETYLATION [LARGE SCALE ANALYSIS] AT LYS-176 AND LYS-288</scope>
    <scope>IDENTIFICATION BY MASS SPECTROMETRY [LARGE SCALE ANALYSIS]</scope>
</reference>
<reference key="24">
    <citation type="journal article" date="2010" name="Sci. Signal.">
        <title>Quantitative phosphoproteomics reveals widespread full phosphorylation site occupancy during mitosis.</title>
        <authorList>
            <person name="Olsen J.V."/>
            <person name="Vermeulen M."/>
            <person name="Santamaria A."/>
            <person name="Kumar C."/>
            <person name="Miller M.L."/>
            <person name="Jensen L.J."/>
            <person name="Gnad F."/>
            <person name="Cox J."/>
            <person name="Jensen T.S."/>
            <person name="Nigg E.A."/>
            <person name="Brunak S."/>
            <person name="Mann M."/>
        </authorList>
    </citation>
    <scope>PHOSPHORYLATION [LARGE SCALE ANALYSIS] AT SER-232 AND SER-269</scope>
    <scope>PHOSPHORYLATION [LARGE SCALE ANALYSIS] AT SER-232 (ISOFORMS 2 AND 3)</scope>
    <scope>PHOSPHORYLATION [LARGE SCALE ANALYSIS] AT SER-137 (ISOFORM 4)</scope>
    <scope>PHOSPHORYLATION [LARGE SCALE ANALYSIS] AT SER-183 (ISOFORM 6)</scope>
    <scope>IDENTIFICATION BY MASS SPECTROMETRY [LARGE SCALE ANALYSIS]</scope>
    <source>
        <tissue>Cervix carcinoma</tissue>
    </source>
</reference>
<reference key="25">
    <citation type="journal article" date="2011" name="BMC Syst. Biol.">
        <title>Initial characterization of the human central proteome.</title>
        <authorList>
            <person name="Burkard T.R."/>
            <person name="Planyavsky M."/>
            <person name="Kaupe I."/>
            <person name="Breitwieser F.P."/>
            <person name="Buerckstuemmer T."/>
            <person name="Bennett K.L."/>
            <person name="Superti-Furga G."/>
            <person name="Colinge J."/>
        </authorList>
    </citation>
    <scope>IDENTIFICATION BY MASS SPECTROMETRY [LARGE SCALE ANALYSIS]</scope>
</reference>
<reference key="26">
    <citation type="journal article" date="2011" name="Sci. Signal.">
        <title>System-wide temporal characterization of the proteome and phosphoproteome of human embryonic stem cell differentiation.</title>
        <authorList>
            <person name="Rigbolt K.T."/>
            <person name="Prokhorova T.A."/>
            <person name="Akimov V."/>
            <person name="Henningsen J."/>
            <person name="Johansen P.T."/>
            <person name="Kratchmarova I."/>
            <person name="Kassem M."/>
            <person name="Mann M."/>
            <person name="Olsen J.V."/>
            <person name="Blagoev B."/>
        </authorList>
    </citation>
    <scope>PHOSPHORYLATION [LARGE SCALE ANALYSIS] AT SER-232</scope>
    <scope>IDENTIFICATION BY MASS SPECTROMETRY [LARGE SCALE ANALYSIS]</scope>
</reference>
<reference key="27">
    <citation type="journal article" date="2013" name="J. Proteome Res.">
        <title>Toward a comprehensive characterization of a human cancer cell phosphoproteome.</title>
        <authorList>
            <person name="Zhou H."/>
            <person name="Di Palma S."/>
            <person name="Preisinger C."/>
            <person name="Peng M."/>
            <person name="Polat A.N."/>
            <person name="Heck A.J."/>
            <person name="Mohammed S."/>
        </authorList>
    </citation>
    <scope>PHOSPHORYLATION [LARGE SCALE ANALYSIS] AT SER-160; SER-232; SER-269; SER-272; SER-275; SER-283 AND THR-291</scope>
    <scope>IDENTIFICATION BY MASS SPECTROMETRY [LARGE SCALE ANALYSIS]</scope>
    <source>
        <tissue>Cervix carcinoma</tissue>
        <tissue>Erythroleukemia</tissue>
    </source>
</reference>
<reference key="28">
    <citation type="journal article" date="2014" name="J. Proteomics">
        <title>An enzyme assisted RP-RPLC approach for in-depth analysis of human liver phosphoproteome.</title>
        <authorList>
            <person name="Bian Y."/>
            <person name="Song C."/>
            <person name="Cheng K."/>
            <person name="Dong M."/>
            <person name="Wang F."/>
            <person name="Huang J."/>
            <person name="Sun D."/>
            <person name="Wang L."/>
            <person name="Ye M."/>
            <person name="Zou H."/>
        </authorList>
    </citation>
    <scope>PHOSPHORYLATION [LARGE SCALE ANALYSIS] AT SER-269 AND SER-275</scope>
    <scope>IDENTIFICATION BY MASS SPECTROMETRY [LARGE SCALE ANALYSIS]</scope>
    <source>
        <tissue>Liver</tissue>
    </source>
</reference>
<reference key="29">
    <citation type="journal article" date="2009" name="Protein Sci.">
        <title>NMR solution structures of actin depolymerizing factor homology domains.</title>
        <authorList>
            <person name="Goroncy A.K."/>
            <person name="Koshiba S."/>
            <person name="Tochio N."/>
            <person name="Tomizawa T."/>
            <person name="Sato M."/>
            <person name="Inoue M."/>
            <person name="Watanabe S."/>
            <person name="Hayashizaki Y."/>
            <person name="Tanaka A."/>
            <person name="Kigawa T."/>
            <person name="Yokoyama S."/>
        </authorList>
    </citation>
    <scope>STRUCTURE BY NMR OF 1-133</scope>
</reference>
<sequence>MAANLSRNGPALQEAYVRVVTEKSPTDWALFTYEGNSNDIRVAGTGEGGLEEMVEELNSGKVMYAFCRVKDPNSGLPKFVLINWTGEGVNDVRKGACASHVSTMASFLKGAHVTINARAEEDVEPECIMEKVAKASGANYSFHKESGRFQDVGPQAPVGSVYQKTNAVSEIKRVGKDSFWAKAEKEEENRRLEEKRRAEEAQRQLEQERRERELREAARREQRYQEQGGEASPQRTWEQQQEVVSRNRNEQESAVHPREIFKQKERAMSTTSISSPQPGKLRSPFLQKQLTQPETHFGREPAAAISRPRADLPAEEPAPSTPPCLVQAEEEAVYEEPPEQETFYEQPPLVQQQGAGSEHIDHHIQGQGLSGQGLCARALYDYQAADDTEISFDPENLITGIEVIDEGWWRGYGPDGHFGMFPANYVELIE</sequence>
<keyword id="KW-0002">3D-structure</keyword>
<keyword id="KW-0007">Acetylation</keyword>
<keyword id="KW-0009">Actin-binding</keyword>
<keyword id="KW-1064">Adaptive immunity</keyword>
<keyword id="KW-0025">Alternative splicing</keyword>
<keyword id="KW-0965">Cell junction</keyword>
<keyword id="KW-1003">Cell membrane</keyword>
<keyword id="KW-0966">Cell projection</keyword>
<keyword id="KW-0175">Coiled coil</keyword>
<keyword id="KW-0963">Cytoplasm</keyword>
<keyword id="KW-0968">Cytoplasmic vesicle</keyword>
<keyword id="KW-0206">Cytoskeleton</keyword>
<keyword id="KW-0254">Endocytosis</keyword>
<keyword id="KW-0967">Endosome</keyword>
<keyword id="KW-0333">Golgi apparatus</keyword>
<keyword id="KW-0391">Immunity</keyword>
<keyword id="KW-0472">Membrane</keyword>
<keyword id="KW-0597">Phosphoprotein</keyword>
<keyword id="KW-1267">Proteomics identification</keyword>
<keyword id="KW-1185">Reference proteome</keyword>
<keyword id="KW-0728">SH3 domain</keyword>
<keyword id="KW-0770">Synapse</keyword>
<keyword id="KW-0813">Transport</keyword>
<name>DBNL_HUMAN</name>
<organism>
    <name type="scientific">Homo sapiens</name>
    <name type="common">Human</name>
    <dbReference type="NCBI Taxonomy" id="9606"/>
    <lineage>
        <taxon>Eukaryota</taxon>
        <taxon>Metazoa</taxon>
        <taxon>Chordata</taxon>
        <taxon>Craniata</taxon>
        <taxon>Vertebrata</taxon>
        <taxon>Euteleostomi</taxon>
        <taxon>Mammalia</taxon>
        <taxon>Eutheria</taxon>
        <taxon>Euarchontoglires</taxon>
        <taxon>Primates</taxon>
        <taxon>Haplorrhini</taxon>
        <taxon>Catarrhini</taxon>
        <taxon>Hominidae</taxon>
        <taxon>Homo</taxon>
    </lineage>
</organism>
<accession>Q9UJU6</accession>
<accession>A4D2I9</accession>
<accession>B4DDP6</accession>
<accession>B4DEM2</accession>
<accession>C9J7P1</accession>
<accession>P84070</accession>
<accession>Q6IAI8</accession>
<accession>Q96F30</accession>
<accession>Q96K74</accession>
<accession>Q9HBN8</accession>
<accession>Q9NR72</accession>
<evidence type="ECO:0000250" key="1"/>
<evidence type="ECO:0000250" key="2">
    <source>
        <dbReference type="UniProtKB" id="Q62418"/>
    </source>
</evidence>
<evidence type="ECO:0000250" key="3">
    <source>
        <dbReference type="UniProtKB" id="Q9JHL4"/>
    </source>
</evidence>
<evidence type="ECO:0000255" key="4"/>
<evidence type="ECO:0000255" key="5">
    <source>
        <dbReference type="PROSITE-ProRule" id="PRU00192"/>
    </source>
</evidence>
<evidence type="ECO:0000255" key="6">
    <source>
        <dbReference type="PROSITE-ProRule" id="PRU00599"/>
    </source>
</evidence>
<evidence type="ECO:0000256" key="7">
    <source>
        <dbReference type="SAM" id="MobiDB-lite"/>
    </source>
</evidence>
<evidence type="ECO:0000269" key="8">
    <source>
    </source>
</evidence>
<evidence type="ECO:0000269" key="9">
    <source>
    </source>
</evidence>
<evidence type="ECO:0000269" key="10">
    <source>
    </source>
</evidence>
<evidence type="ECO:0000303" key="11">
    <source>
    </source>
</evidence>
<evidence type="ECO:0000303" key="12">
    <source>
    </source>
</evidence>
<evidence type="ECO:0000305" key="13"/>
<evidence type="ECO:0007744" key="14">
    <source>
    </source>
</evidence>
<evidence type="ECO:0007744" key="15">
    <source>
    </source>
</evidence>
<evidence type="ECO:0007744" key="16">
    <source>
    </source>
</evidence>
<evidence type="ECO:0007744" key="17">
    <source>
    </source>
</evidence>
<evidence type="ECO:0007744" key="18">
    <source>
    </source>
</evidence>
<evidence type="ECO:0007744" key="19">
    <source>
    </source>
</evidence>
<evidence type="ECO:0007744" key="20">
    <source>
    </source>
</evidence>
<evidence type="ECO:0007744" key="21">
    <source>
    </source>
</evidence>
<evidence type="ECO:0007744" key="22">
    <source>
    </source>
</evidence>
<evidence type="ECO:0007744" key="23">
    <source>
    </source>
</evidence>
<evidence type="ECO:0007744" key="24">
    <source>
    </source>
</evidence>
<evidence type="ECO:0007829" key="25">
    <source>
        <dbReference type="PDB" id="1X67"/>
    </source>
</evidence>
<proteinExistence type="evidence at protein level"/>
<dbReference type="EMBL" id="AF197060">
    <property type="protein sequence ID" value="AAF13701.1"/>
    <property type="molecule type" value="mRNA"/>
</dbReference>
<dbReference type="EMBL" id="AF077353">
    <property type="protein sequence ID" value="AAF80228.1"/>
    <property type="molecule type" value="mRNA"/>
</dbReference>
<dbReference type="EMBL" id="AF250287">
    <property type="protein sequence ID" value="AAF81273.1"/>
    <property type="molecule type" value="mRNA"/>
</dbReference>
<dbReference type="EMBL" id="AF151364">
    <property type="protein sequence ID" value="AAG13120.1"/>
    <property type="molecule type" value="mRNA"/>
</dbReference>
<dbReference type="EMBL" id="AF218020">
    <property type="protein sequence ID" value="AAG17262.2"/>
    <property type="molecule type" value="mRNA"/>
</dbReference>
<dbReference type="EMBL" id="AK027367">
    <property type="protein sequence ID" value="BAB55065.1"/>
    <property type="molecule type" value="mRNA"/>
</dbReference>
<dbReference type="EMBL" id="AK293279">
    <property type="protein sequence ID" value="BAG56807.1"/>
    <property type="molecule type" value="mRNA"/>
</dbReference>
<dbReference type="EMBL" id="AK293698">
    <property type="protein sequence ID" value="BAG57133.1"/>
    <property type="molecule type" value="mRNA"/>
</dbReference>
<dbReference type="EMBL" id="CR457167">
    <property type="protein sequence ID" value="CAG33448.1"/>
    <property type="molecule type" value="mRNA"/>
</dbReference>
<dbReference type="EMBL" id="AC017116">
    <property type="status" value="NOT_ANNOTATED_CDS"/>
    <property type="molecule type" value="Genomic_DNA"/>
</dbReference>
<dbReference type="EMBL" id="CH236960">
    <property type="protein sequence ID" value="EAL23770.1"/>
    <property type="molecule type" value="Genomic_DNA"/>
</dbReference>
<dbReference type="EMBL" id="CH471128">
    <property type="protein sequence ID" value="EAW61132.1"/>
    <property type="molecule type" value="Genomic_DNA"/>
</dbReference>
<dbReference type="EMBL" id="BC011677">
    <property type="protein sequence ID" value="AAH11677.1"/>
    <property type="molecule type" value="mRNA"/>
</dbReference>
<dbReference type="EMBL" id="BC031687">
    <property type="protein sequence ID" value="AAH31687.1"/>
    <property type="molecule type" value="mRNA"/>
</dbReference>
<dbReference type="CCDS" id="CCDS34622.1">
    <molecule id="Q9UJU6-2"/>
</dbReference>
<dbReference type="CCDS" id="CCDS34623.1">
    <molecule id="Q9UJU6-1"/>
</dbReference>
<dbReference type="CCDS" id="CCDS47579.1">
    <molecule id="Q9UJU6-3"/>
</dbReference>
<dbReference type="CCDS" id="CCDS64633.1">
    <molecule id="Q9UJU6-4"/>
</dbReference>
<dbReference type="CCDS" id="CCDS64634.1">
    <molecule id="Q9UJU6-5"/>
</dbReference>
<dbReference type="RefSeq" id="NP_001014436.1">
    <molecule id="Q9UJU6-1"/>
    <property type="nucleotide sequence ID" value="NM_001014436.3"/>
</dbReference>
<dbReference type="RefSeq" id="NP_001116428.1">
    <molecule id="Q9UJU6-3"/>
    <property type="nucleotide sequence ID" value="NM_001122956.2"/>
</dbReference>
<dbReference type="RefSeq" id="NP_001271242.1">
    <molecule id="Q9UJU6-5"/>
    <property type="nucleotide sequence ID" value="NM_001284313.2"/>
</dbReference>
<dbReference type="RefSeq" id="NP_001271244.1">
    <molecule id="Q9UJU6-4"/>
    <property type="nucleotide sequence ID" value="NM_001284315.2"/>
</dbReference>
<dbReference type="RefSeq" id="NP_054782.2">
    <molecule id="Q9UJU6-2"/>
    <property type="nucleotide sequence ID" value="NM_014063.6"/>
</dbReference>
<dbReference type="PDB" id="1X67">
    <property type="method" value="NMR"/>
    <property type="chains" value="A=1-133"/>
</dbReference>
<dbReference type="PDBsum" id="1X67"/>
<dbReference type="SMR" id="Q9UJU6"/>
<dbReference type="BioGRID" id="118809">
    <property type="interactions" value="194"/>
</dbReference>
<dbReference type="FunCoup" id="Q9UJU6">
    <property type="interactions" value="2669"/>
</dbReference>
<dbReference type="IntAct" id="Q9UJU6">
    <property type="interactions" value="78"/>
</dbReference>
<dbReference type="MINT" id="Q9UJU6"/>
<dbReference type="STRING" id="9606.ENSP00000417653"/>
<dbReference type="GlyGen" id="Q9UJU6">
    <property type="glycosylation" value="6 sites, 1 O-linked glycan (5 sites)"/>
</dbReference>
<dbReference type="iPTMnet" id="Q9UJU6"/>
<dbReference type="MetOSite" id="Q9UJU6"/>
<dbReference type="PhosphoSitePlus" id="Q9UJU6"/>
<dbReference type="SwissPalm" id="Q9UJU6"/>
<dbReference type="BioMuta" id="DBNL"/>
<dbReference type="DMDM" id="51316115"/>
<dbReference type="OGP" id="Q9UJU6"/>
<dbReference type="jPOST" id="Q9UJU6"/>
<dbReference type="MassIVE" id="Q9UJU6"/>
<dbReference type="PaxDb" id="9606-ENSP00000417653"/>
<dbReference type="PeptideAtlas" id="Q9UJU6"/>
<dbReference type="ProteomicsDB" id="3878"/>
<dbReference type="ProteomicsDB" id="3970"/>
<dbReference type="ProteomicsDB" id="84659">
    <molecule id="Q9UJU6-1"/>
</dbReference>
<dbReference type="ProteomicsDB" id="84660">
    <molecule id="Q9UJU6-2"/>
</dbReference>
<dbReference type="ProteomicsDB" id="84661">
    <molecule id="Q9UJU6-3"/>
</dbReference>
<dbReference type="ProteomicsDB" id="8938"/>
<dbReference type="Pumba" id="Q9UJU6"/>
<dbReference type="TopDownProteomics" id="Q9UJU6-2">
    <molecule id="Q9UJU6-2"/>
</dbReference>
<dbReference type="ABCD" id="Q9UJU6">
    <property type="antibodies" value="5 sequenced antibodies"/>
</dbReference>
<dbReference type="Antibodypedia" id="13203">
    <property type="antibodies" value="270 antibodies from 34 providers"/>
</dbReference>
<dbReference type="DNASU" id="28988"/>
<dbReference type="Ensembl" id="ENST00000440166.5">
    <molecule id="Q9UJU6-5"/>
    <property type="protein sequence ID" value="ENSP00000415173.1"/>
    <property type="gene ID" value="ENSG00000136279.21"/>
</dbReference>
<dbReference type="Ensembl" id="ENST00000448521.6">
    <molecule id="Q9UJU6-1"/>
    <property type="protein sequence ID" value="ENSP00000411701.1"/>
    <property type="gene ID" value="ENSG00000136279.21"/>
</dbReference>
<dbReference type="Ensembl" id="ENST00000456905.5">
    <molecule id="Q9UJU6-6"/>
    <property type="protein sequence ID" value="ENSP00000416421.1"/>
    <property type="gene ID" value="ENSG00000136279.21"/>
</dbReference>
<dbReference type="Ensembl" id="ENST00000468694.5">
    <molecule id="Q9UJU6-3"/>
    <property type="protein sequence ID" value="ENSP00000417653.1"/>
    <property type="gene ID" value="ENSG00000136279.21"/>
</dbReference>
<dbReference type="Ensembl" id="ENST00000490734.6">
    <molecule id="Q9UJU6-4"/>
    <property type="protein sequence ID" value="ENSP00000417749.2"/>
    <property type="gene ID" value="ENSG00000136279.21"/>
</dbReference>
<dbReference type="Ensembl" id="ENST00000494774.5">
    <molecule id="Q9UJU6-2"/>
    <property type="protein sequence ID" value="ENSP00000419992.1"/>
    <property type="gene ID" value="ENSG00000136279.21"/>
</dbReference>
<dbReference type="GeneID" id="28988"/>
<dbReference type="KEGG" id="hsa:28988"/>
<dbReference type="MANE-Select" id="ENST00000448521.6">
    <property type="protein sequence ID" value="ENSP00000411701.1"/>
    <property type="RefSeq nucleotide sequence ID" value="NM_001014436.3"/>
    <property type="RefSeq protein sequence ID" value="NP_001014436.1"/>
</dbReference>
<dbReference type="UCSC" id="uc003tjo.5">
    <molecule id="Q9UJU6-1"/>
    <property type="organism name" value="human"/>
</dbReference>
<dbReference type="AGR" id="HGNC:2696"/>
<dbReference type="CTD" id="28988"/>
<dbReference type="DisGeNET" id="28988"/>
<dbReference type="GeneCards" id="DBNL"/>
<dbReference type="HGNC" id="HGNC:2696">
    <property type="gene designation" value="DBNL"/>
</dbReference>
<dbReference type="HPA" id="ENSG00000136279">
    <property type="expression patterns" value="Low tissue specificity"/>
</dbReference>
<dbReference type="MalaCards" id="DBNL"/>
<dbReference type="MIM" id="610106">
    <property type="type" value="gene"/>
</dbReference>
<dbReference type="neXtProt" id="NX_Q9UJU6"/>
<dbReference type="OpenTargets" id="ENSG00000136279"/>
<dbReference type="PharmGKB" id="PA27164"/>
<dbReference type="VEuPathDB" id="HostDB:ENSG00000136279"/>
<dbReference type="eggNOG" id="KOG3655">
    <property type="taxonomic scope" value="Eukaryota"/>
</dbReference>
<dbReference type="GeneTree" id="ENSGT00940000156732"/>
<dbReference type="HOGENOM" id="CLU_013085_0_1_1"/>
<dbReference type="InParanoid" id="Q9UJU6"/>
<dbReference type="OMA" id="FKEPRGA"/>
<dbReference type="OrthoDB" id="5971719at2759"/>
<dbReference type="PAN-GO" id="Q9UJU6">
    <property type="GO annotations" value="14 GO annotations based on evolutionary models"/>
</dbReference>
<dbReference type="PhylomeDB" id="Q9UJU6"/>
<dbReference type="TreeFam" id="TF318935"/>
<dbReference type="PathwayCommons" id="Q9UJU6"/>
<dbReference type="Reactome" id="R-HSA-264870">
    <property type="pathway name" value="Caspase-mediated cleavage of cytoskeletal proteins"/>
</dbReference>
<dbReference type="Reactome" id="R-HSA-6794361">
    <property type="pathway name" value="Neurexins and neuroligins"/>
</dbReference>
<dbReference type="Reactome" id="R-HSA-6798695">
    <property type="pathway name" value="Neutrophil degranulation"/>
</dbReference>
<dbReference type="SignaLink" id="Q9UJU6"/>
<dbReference type="SIGNOR" id="Q9UJU6"/>
<dbReference type="BioGRID-ORCS" id="28988">
    <property type="hits" value="16 hits in 1152 CRISPR screens"/>
</dbReference>
<dbReference type="CD-CODE" id="FB4E32DD">
    <property type="entry name" value="Presynaptic clusters and postsynaptic densities"/>
</dbReference>
<dbReference type="ChiTaRS" id="DBNL">
    <property type="organism name" value="human"/>
</dbReference>
<dbReference type="EvolutionaryTrace" id="Q9UJU6"/>
<dbReference type="GeneWiki" id="Drebrin-like"/>
<dbReference type="GenomeRNAi" id="28988"/>
<dbReference type="Pharos" id="Q9UJU6">
    <property type="development level" value="Tbio"/>
</dbReference>
<dbReference type="PRO" id="PR:Q9UJU6"/>
<dbReference type="Proteomes" id="UP000005640">
    <property type="component" value="Chromosome 7"/>
</dbReference>
<dbReference type="RNAct" id="Q9UJU6">
    <property type="molecule type" value="protein"/>
</dbReference>
<dbReference type="Bgee" id="ENSG00000136279">
    <property type="expression patterns" value="Expressed in lower esophagus mucosa and 164 other cell types or tissues"/>
</dbReference>
<dbReference type="ExpressionAtlas" id="Q9UJU6">
    <property type="expression patterns" value="baseline and differential"/>
</dbReference>
<dbReference type="GO" id="GO:0070161">
    <property type="term" value="C:anchoring junction"/>
    <property type="evidence" value="ECO:0007669"/>
    <property type="project" value="UniProtKB-KW"/>
</dbReference>
<dbReference type="GO" id="GO:0005938">
    <property type="term" value="C:cell cortex"/>
    <property type="evidence" value="ECO:0000250"/>
    <property type="project" value="UniProtKB"/>
</dbReference>
<dbReference type="GO" id="GO:0030665">
    <property type="term" value="C:clathrin-coated vesicle membrane"/>
    <property type="evidence" value="ECO:0007669"/>
    <property type="project" value="UniProtKB-SubCell"/>
</dbReference>
<dbReference type="GO" id="GO:0005737">
    <property type="term" value="C:cytoplasm"/>
    <property type="evidence" value="ECO:0000314"/>
    <property type="project" value="BHF-UCL"/>
</dbReference>
<dbReference type="GO" id="GO:0005829">
    <property type="term" value="C:cytosol"/>
    <property type="evidence" value="ECO:0000304"/>
    <property type="project" value="Reactome"/>
</dbReference>
<dbReference type="GO" id="GO:0030425">
    <property type="term" value="C:dendrite"/>
    <property type="evidence" value="ECO:0007669"/>
    <property type="project" value="UniProtKB-SubCell"/>
</dbReference>
<dbReference type="GO" id="GO:0005769">
    <property type="term" value="C:early endosome"/>
    <property type="evidence" value="ECO:0007669"/>
    <property type="project" value="UniProtKB-SubCell"/>
</dbReference>
<dbReference type="GO" id="GO:0070062">
    <property type="term" value="C:extracellular exosome"/>
    <property type="evidence" value="ECO:0007005"/>
    <property type="project" value="UniProtKB"/>
</dbReference>
<dbReference type="GO" id="GO:0005576">
    <property type="term" value="C:extracellular region"/>
    <property type="evidence" value="ECO:0000304"/>
    <property type="project" value="Reactome"/>
</dbReference>
<dbReference type="GO" id="GO:1904813">
    <property type="term" value="C:ficolin-1-rich granule lumen"/>
    <property type="evidence" value="ECO:0000304"/>
    <property type="project" value="Reactome"/>
</dbReference>
<dbReference type="GO" id="GO:0098978">
    <property type="term" value="C:glutamatergic synapse"/>
    <property type="evidence" value="ECO:0007669"/>
    <property type="project" value="Ensembl"/>
</dbReference>
<dbReference type="GO" id="GO:0000139">
    <property type="term" value="C:Golgi membrane"/>
    <property type="evidence" value="ECO:0007669"/>
    <property type="project" value="UniProtKB-SubCell"/>
</dbReference>
<dbReference type="GO" id="GO:0043231">
    <property type="term" value="C:intracellular membrane-bounded organelle"/>
    <property type="evidence" value="ECO:0000314"/>
    <property type="project" value="HPA"/>
</dbReference>
<dbReference type="GO" id="GO:0030027">
    <property type="term" value="C:lamellipodium"/>
    <property type="evidence" value="ECO:0000250"/>
    <property type="project" value="UniProtKB"/>
</dbReference>
<dbReference type="GO" id="GO:0016020">
    <property type="term" value="C:membrane"/>
    <property type="evidence" value="ECO:0000318"/>
    <property type="project" value="GO_Central"/>
</dbReference>
<dbReference type="GO" id="GO:0043204">
    <property type="term" value="C:perikaryon"/>
    <property type="evidence" value="ECO:0007669"/>
    <property type="project" value="UniProtKB-SubCell"/>
</dbReference>
<dbReference type="GO" id="GO:0005886">
    <property type="term" value="C:plasma membrane"/>
    <property type="evidence" value="ECO:0000314"/>
    <property type="project" value="HPA"/>
</dbReference>
<dbReference type="GO" id="GO:0002102">
    <property type="term" value="C:podosome"/>
    <property type="evidence" value="ECO:0000250"/>
    <property type="project" value="UniProtKB"/>
</dbReference>
<dbReference type="GO" id="GO:0014069">
    <property type="term" value="C:postsynaptic density"/>
    <property type="evidence" value="ECO:0007669"/>
    <property type="project" value="UniProtKB-SubCell"/>
</dbReference>
<dbReference type="GO" id="GO:0098793">
    <property type="term" value="C:presynapse"/>
    <property type="evidence" value="ECO:0007669"/>
    <property type="project" value="Ensembl"/>
</dbReference>
<dbReference type="GO" id="GO:0001726">
    <property type="term" value="C:ruffle"/>
    <property type="evidence" value="ECO:0000250"/>
    <property type="project" value="UniProtKB"/>
</dbReference>
<dbReference type="GO" id="GO:0034774">
    <property type="term" value="C:secretory granule lumen"/>
    <property type="evidence" value="ECO:0000304"/>
    <property type="project" value="Reactome"/>
</dbReference>
<dbReference type="GO" id="GO:1904724">
    <property type="term" value="C:tertiary granule lumen"/>
    <property type="evidence" value="ECO:0000304"/>
    <property type="project" value="Reactome"/>
</dbReference>
<dbReference type="GO" id="GO:0003779">
    <property type="term" value="F:actin binding"/>
    <property type="evidence" value="ECO:0000250"/>
    <property type="project" value="UniProtKB"/>
</dbReference>
<dbReference type="GO" id="GO:0051015">
    <property type="term" value="F:actin filament binding"/>
    <property type="evidence" value="ECO:0000250"/>
    <property type="project" value="UniProtKB"/>
</dbReference>
<dbReference type="GO" id="GO:0045296">
    <property type="term" value="F:cadherin binding"/>
    <property type="evidence" value="ECO:0007005"/>
    <property type="project" value="BHF-UCL"/>
</dbReference>
<dbReference type="GO" id="GO:0008047">
    <property type="term" value="F:enzyme activator activity"/>
    <property type="evidence" value="ECO:0000304"/>
    <property type="project" value="ProtInc"/>
</dbReference>
<dbReference type="GO" id="GO:0019904">
    <property type="term" value="F:protein domain specific binding"/>
    <property type="evidence" value="ECO:0007669"/>
    <property type="project" value="Ensembl"/>
</dbReference>
<dbReference type="GO" id="GO:0098973">
    <property type="term" value="F:structural constituent of postsynaptic actin cytoskeleton"/>
    <property type="evidence" value="ECO:0007669"/>
    <property type="project" value="Ensembl"/>
</dbReference>
<dbReference type="GO" id="GO:0002250">
    <property type="term" value="P:adaptive immune response"/>
    <property type="evidence" value="ECO:0007669"/>
    <property type="project" value="UniProtKB-KW"/>
</dbReference>
<dbReference type="GO" id="GO:0006897">
    <property type="term" value="P:endocytosis"/>
    <property type="evidence" value="ECO:0007669"/>
    <property type="project" value="UniProtKB-KW"/>
</dbReference>
<dbReference type="GO" id="GO:0061024">
    <property type="term" value="P:membrane organization"/>
    <property type="evidence" value="ECO:0000318"/>
    <property type="project" value="GO_Central"/>
</dbReference>
<dbReference type="GO" id="GO:0048812">
    <property type="term" value="P:neuron projection morphogenesis"/>
    <property type="evidence" value="ECO:0000250"/>
    <property type="project" value="UniProtKB"/>
</dbReference>
<dbReference type="GO" id="GO:0071800">
    <property type="term" value="P:podosome assembly"/>
    <property type="evidence" value="ECO:0000250"/>
    <property type="project" value="UniProtKB"/>
</dbReference>
<dbReference type="GO" id="GO:0016601">
    <property type="term" value="P:Rac protein signal transduction"/>
    <property type="evidence" value="ECO:0000250"/>
    <property type="project" value="UniProtKB"/>
</dbReference>
<dbReference type="GO" id="GO:0007416">
    <property type="term" value="P:synapse assembly"/>
    <property type="evidence" value="ECO:0000250"/>
    <property type="project" value="UniProtKB"/>
</dbReference>
<dbReference type="CDD" id="cd11281">
    <property type="entry name" value="ADF_drebrin_like"/>
    <property type="match status" value="1"/>
</dbReference>
<dbReference type="CDD" id="cd11960">
    <property type="entry name" value="SH3_Abp1_eu"/>
    <property type="match status" value="1"/>
</dbReference>
<dbReference type="FunFam" id="3.40.20.10:FF:000011">
    <property type="entry name" value="Drebrin-like protein B"/>
    <property type="match status" value="1"/>
</dbReference>
<dbReference type="FunFam" id="2.30.30.40:FF:000046">
    <property type="entry name" value="Drebrin-like protein isoform B"/>
    <property type="match status" value="1"/>
</dbReference>
<dbReference type="Gene3D" id="3.40.20.10">
    <property type="entry name" value="Severin"/>
    <property type="match status" value="1"/>
</dbReference>
<dbReference type="Gene3D" id="2.30.30.40">
    <property type="entry name" value="SH3 Domains"/>
    <property type="match status" value="1"/>
</dbReference>
<dbReference type="InterPro" id="IPR002108">
    <property type="entry name" value="ADF-H"/>
</dbReference>
<dbReference type="InterPro" id="IPR029006">
    <property type="entry name" value="ADF-H/Gelsolin-like_dom_sf"/>
</dbReference>
<dbReference type="InterPro" id="IPR035717">
    <property type="entry name" value="Drebrin-like_SH3"/>
</dbReference>
<dbReference type="InterPro" id="IPR036028">
    <property type="entry name" value="SH3-like_dom_sf"/>
</dbReference>
<dbReference type="InterPro" id="IPR001452">
    <property type="entry name" value="SH3_domain"/>
</dbReference>
<dbReference type="PANTHER" id="PTHR10829">
    <property type="entry name" value="CORTACTIN AND DREBRIN"/>
    <property type="match status" value="1"/>
</dbReference>
<dbReference type="PANTHER" id="PTHR10829:SF12">
    <property type="entry name" value="DREBRIN-LIKE PROTEIN"/>
    <property type="match status" value="1"/>
</dbReference>
<dbReference type="Pfam" id="PF00241">
    <property type="entry name" value="Cofilin_ADF"/>
    <property type="match status" value="1"/>
</dbReference>
<dbReference type="Pfam" id="PF14604">
    <property type="entry name" value="SH3_9"/>
    <property type="match status" value="1"/>
</dbReference>
<dbReference type="SMART" id="SM00102">
    <property type="entry name" value="ADF"/>
    <property type="match status" value="1"/>
</dbReference>
<dbReference type="SMART" id="SM00326">
    <property type="entry name" value="SH3"/>
    <property type="match status" value="1"/>
</dbReference>
<dbReference type="SUPFAM" id="SSF55753">
    <property type="entry name" value="Actin depolymerizing proteins"/>
    <property type="match status" value="1"/>
</dbReference>
<dbReference type="SUPFAM" id="SSF50044">
    <property type="entry name" value="SH3-domain"/>
    <property type="match status" value="1"/>
</dbReference>
<dbReference type="PROSITE" id="PS51263">
    <property type="entry name" value="ADF_H"/>
    <property type="match status" value="1"/>
</dbReference>
<dbReference type="PROSITE" id="PS50002">
    <property type="entry name" value="SH3"/>
    <property type="match status" value="1"/>
</dbReference>
<comment type="function">
    <text evidence="1 9">Adapter protein that binds F-actin and DNM1, and thereby plays a role in receptor-mediated endocytosis. Plays a role in the reorganization of the actin cytoskeleton, formation of cell projections, such as neurites, in neuron morphogenesis and synapse formation via its interaction with WASL and COBL. Does not bind G-actin and promote actin polymerization by itself. Required for the formation of organized podosome rosettes (By similarity). May act as a common effector of antigen receptor-signaling pathways in leukocytes. Acts as a key component of the immunological synapse that regulates T-cell activation by bridging TCRs and the actin cytoskeleton to gene activation and endocytic processes.</text>
</comment>
<comment type="subunit">
    <text evidence="1 8 10">Interacts with SHANK2, SHANK3 and SYN1. Interacts with FGD1 and DNM1. Interacts with ANKRD54. Interacts with COBL. Interacts with WASL and WIPF1 (By similarity). Interacts with MAP4K1 and PRAM1.</text>
</comment>
<comment type="interaction">
    <interactant intactId="EBI-751783">
        <id>Q9UJU6</id>
    </interactant>
    <interactant intactId="EBI-717666">
        <id>Q96AP0</id>
        <label>ACD</label>
    </interactant>
    <organismsDiffer>false</organismsDiffer>
    <experiments>2</experiments>
</comment>
<comment type="interaction">
    <interactant intactId="EBI-751783">
        <id>Q9UJU6</id>
    </interactant>
    <interactant intactId="EBI-10988864">
        <id>P46379-2</id>
        <label>BAG6</label>
    </interactant>
    <organismsDiffer>false</organismsDiffer>
    <experiments>3</experiments>
</comment>
<comment type="interaction">
    <interactant intactId="EBI-751783">
        <id>Q9UJU6</id>
    </interactant>
    <interactant intactId="EBI-395638">
        <id>O14645</id>
        <label>DNALI1</label>
    </interactant>
    <organismsDiffer>false</organismsDiffer>
    <experiments>3</experiments>
</comment>
<comment type="interaction">
    <interactant intactId="EBI-751783">
        <id>Q9UJU6</id>
    </interactant>
    <interactant intactId="EBI-348399">
        <id>P22607</id>
        <label>FGFR3</label>
    </interactant>
    <organismsDiffer>false</organismsDiffer>
    <experiments>3</experiments>
</comment>
<comment type="interaction">
    <interactant intactId="EBI-751783">
        <id>Q9UJU6</id>
    </interactant>
    <interactant intactId="EBI-8285963">
        <id>Q14957</id>
        <label>GRIN2C</label>
    </interactant>
    <organismsDiffer>false</organismsDiffer>
    <experiments>3</experiments>
</comment>
<comment type="interaction">
    <interactant intactId="EBI-751783">
        <id>Q9UJU6</id>
    </interactant>
    <interactant intactId="EBI-351506">
        <id>P06396</id>
        <label>GSN</label>
    </interactant>
    <organismsDiffer>false</organismsDiffer>
    <experiments>3</experiments>
</comment>
<comment type="interaction">
    <interactant intactId="EBI-751783">
        <id>Q9UJU6</id>
    </interactant>
    <interactant intactId="EBI-466029">
        <id>P42858</id>
        <label>HTT</label>
    </interactant>
    <organismsDiffer>false</organismsDiffer>
    <experiments>3</experiments>
</comment>
<comment type="interaction">
    <interactant intactId="EBI-751783">
        <id>Q9UJU6</id>
    </interactant>
    <interactant intactId="EBI-948266">
        <id>O14901</id>
        <label>KLF11</label>
    </interactant>
    <organismsDiffer>false</organismsDiffer>
    <experiments>3</experiments>
</comment>
<comment type="interaction">
    <interactant intactId="EBI-751783">
        <id>Q9UJU6</id>
    </interactant>
    <interactant intactId="EBI-747035">
        <id>Q9H788</id>
        <label>SH2D4A</label>
    </interactant>
    <organismsDiffer>false</organismsDiffer>
    <experiments>6</experiments>
</comment>
<comment type="interaction">
    <interactant intactId="EBI-751783">
        <id>Q9UJU6</id>
    </interactant>
    <interactant intactId="EBI-10308083">
        <id>Q9H788-2</id>
        <label>SH2D4A</label>
    </interactant>
    <organismsDiffer>false</organismsDiffer>
    <experiments>3</experiments>
</comment>
<comment type="interaction">
    <interactant intactId="EBI-751783">
        <id>Q9UJU6</id>
    </interactant>
    <interactant intactId="EBI-727062">
        <id>P78314</id>
        <label>SH3BP2</label>
    </interactant>
    <organismsDiffer>false</organismsDiffer>
    <experiments>7</experiments>
</comment>
<comment type="interaction">
    <interactant intactId="EBI-751783">
        <id>Q9UJU6</id>
    </interactant>
    <interactant intactId="EBI-741480">
        <id>Q9UMX0</id>
        <label>UBQLN1</label>
    </interactant>
    <organismsDiffer>false</organismsDiffer>
    <experiments>3</experiments>
</comment>
<comment type="interaction">
    <interactant intactId="EBI-12192777">
        <id>Q9UJU6-2</id>
    </interactant>
    <interactant intactId="EBI-747035">
        <id>Q9H788</id>
        <label>SH2D4A</label>
    </interactant>
    <organismsDiffer>false</organismsDiffer>
    <experiments>3</experiments>
</comment>
<comment type="interaction">
    <interactant intactId="EBI-12192777">
        <id>Q9UJU6-2</id>
    </interactant>
    <interactant intactId="EBI-12304031">
        <id>P78314-3</id>
        <label>SH3BP2</label>
    </interactant>
    <organismsDiffer>false</organismsDiffer>
    <experiments>3</experiments>
</comment>
<comment type="subcellular location">
    <subcellularLocation>
        <location evidence="2">Cytoplasm</location>
        <location evidence="2">Cytoskeleton</location>
    </subcellularLocation>
    <subcellularLocation>
        <location evidence="2">Cell projection</location>
        <location evidence="2">Lamellipodium</location>
    </subcellularLocation>
    <subcellularLocation>
        <location evidence="2">Cell projection</location>
        <location evidence="2">Ruffle</location>
    </subcellularLocation>
    <subcellularLocation>
        <location evidence="2">Cytoplasm</location>
        <location evidence="2">Cell cortex</location>
    </subcellularLocation>
    <subcellularLocation>
        <location evidence="3">Cytoplasm</location>
        <location evidence="3">Cytosol</location>
    </subcellularLocation>
    <subcellularLocation>
        <location evidence="2">Synapse</location>
    </subcellularLocation>
    <subcellularLocation>
        <location evidence="2">Perikaryon</location>
    </subcellularLocation>
    <subcellularLocation>
        <location evidence="2">Cell projection</location>
        <location evidence="2">Neuron projection</location>
    </subcellularLocation>
    <subcellularLocation>
        <location evidence="9">Cell membrane</location>
        <topology evidence="2">Peripheral membrane protein</topology>
        <orientation evidence="2">Cytoplasmic side</orientation>
    </subcellularLocation>
    <subcellularLocation>
        <location evidence="2">Cytoplasmic vesicle</location>
        <location evidence="2">Clathrin-coated vesicle membrane</location>
        <topology evidence="2">Peripheral membrane protein</topology>
        <orientation evidence="2">Cytoplasmic side</orientation>
    </subcellularLocation>
    <subcellularLocation>
        <location evidence="2">Golgi apparatus membrane</location>
        <topology evidence="2">Peripheral membrane protein</topology>
        <orientation evidence="2">Cytoplasmic side</orientation>
    </subcellularLocation>
    <subcellularLocation>
        <location evidence="2">Cell projection</location>
        <location evidence="2">Podosome</location>
    </subcellularLocation>
    <subcellularLocation>
        <location evidence="9">Early endosome</location>
    </subcellularLocation>
    <subcellularLocation>
        <location evidence="3">Cell projection</location>
        <location evidence="3">Dendrite</location>
    </subcellularLocation>
    <subcellularLocation>
        <location evidence="3">Postsynaptic density</location>
    </subcellularLocation>
    <text evidence="2 3">Associates with lamellipodial actin and membrane ruffles. Colocalizes with actin and cortactin at podosome dots and podosome rosettes.</text>
</comment>
<comment type="alternative products">
    <event type="alternative splicing"/>
    <isoform>
        <id>Q9UJU6-1</id>
        <name>1</name>
        <sequence type="displayed"/>
    </isoform>
    <isoform>
        <id>Q9UJU6-2</id>
        <name>2</name>
        <sequence type="described" ref="VSP_011398"/>
    </isoform>
    <isoform>
        <id>Q9UJU6-3</id>
        <name>3</name>
        <sequence type="described" ref="VSP_011398 VSP_011399"/>
    </isoform>
    <isoform>
        <id>Q9UJU6-4</id>
        <name>4</name>
        <sequence type="described" ref="VSP_054779 VSP_011398"/>
    </isoform>
    <isoform>
        <id>Q9UJU6-5</id>
        <name>5</name>
        <sequence type="described" ref="VSP_054780"/>
    </isoform>
    <isoform>
        <id>Q9UJU6-6</id>
        <name>6</name>
        <sequence type="described" ref="VSP_057346 VSP_011398"/>
    </isoform>
</comment>
<comment type="domain">
    <text>The SH3 domain mediates interaction with SHANK2, SHANK3 and PRAM1.</text>
</comment>
<comment type="PTM">
    <text>Degraded by caspases during apoptosis.</text>
</comment>
<comment type="similarity">
    <text evidence="13">Belongs to the ABP1 family.</text>
</comment>
<feature type="chain" id="PRO_0000079793" description="Drebrin-like protein">
    <location>
        <begin position="1"/>
        <end position="430"/>
    </location>
</feature>
<feature type="domain" description="ADF-H" evidence="6">
    <location>
        <begin position="4"/>
        <end position="133"/>
    </location>
</feature>
<feature type="domain" description="SH3" evidence="5">
    <location>
        <begin position="371"/>
        <end position="430"/>
    </location>
</feature>
<feature type="region of interest" description="Disordered" evidence="7">
    <location>
        <begin position="219"/>
        <end position="283"/>
    </location>
</feature>
<feature type="coiled-coil region" evidence="4">
    <location>
        <begin position="176"/>
        <end position="231"/>
    </location>
</feature>
<feature type="compositionally biased region" description="Polar residues" evidence="7">
    <location>
        <begin position="233"/>
        <end position="244"/>
    </location>
</feature>
<feature type="compositionally biased region" description="Basic and acidic residues" evidence="7">
    <location>
        <begin position="245"/>
        <end position="267"/>
    </location>
</feature>
<feature type="compositionally biased region" description="Polar residues" evidence="7">
    <location>
        <begin position="268"/>
        <end position="277"/>
    </location>
</feature>
<feature type="site" description="Cleavage; by caspase-3">
    <location>
        <begin position="361"/>
        <end position="362"/>
    </location>
</feature>
<feature type="modified residue" description="Phosphothreonine" evidence="2">
    <location>
        <position position="26"/>
    </location>
</feature>
<feature type="modified residue" description="Phosphoserine" evidence="23">
    <location>
        <position position="160"/>
    </location>
</feature>
<feature type="modified residue" description="N6-acetyllysine" evidence="19">
    <location>
        <position position="176"/>
    </location>
</feature>
<feature type="modified residue" description="Phosphoserine" evidence="15 17 18 20 21 22 23">
    <location>
        <position position="232"/>
    </location>
</feature>
<feature type="modified residue" description="Phosphoserine" evidence="18 20 21 23 24">
    <location>
        <position position="269"/>
    </location>
</feature>
<feature type="modified residue" description="Phosphoserine" evidence="23">
    <location>
        <position position="272"/>
    </location>
</feature>
<feature type="modified residue" description="Phosphoserine" evidence="23 24">
    <location>
        <position position="275"/>
    </location>
</feature>
<feature type="modified residue" description="Phosphoserine" evidence="14 16 23">
    <location>
        <position position="283"/>
    </location>
</feature>
<feature type="modified residue" description="N6-acetyllysine" evidence="19">
    <location>
        <position position="288"/>
    </location>
</feature>
<feature type="modified residue" description="Phosphothreonine" evidence="23">
    <location>
        <position position="291"/>
    </location>
</feature>
<feature type="modified residue" description="Phosphotyrosine" evidence="2">
    <location>
        <position position="334"/>
    </location>
</feature>
<feature type="modified residue" description="Phosphotyrosine" evidence="2">
    <location>
        <position position="344"/>
    </location>
</feature>
<feature type="splice variant" id="VSP_054779" description="In isoform 4." evidence="13">
    <original>MAANLSRNGPALQEAYVRVVTEKSPTDWALFTYEGNSNDIRVAGTGEGGLEEMVEELNSGKVMYAFCRVKDPNSGLPKFVLINWTGEGVNDVRKGACASHVSTMASFLK</original>
    <variation>MKATAMTSAWLAQG</variation>
    <location>
        <begin position="1"/>
        <end position="109"/>
    </location>
</feature>
<feature type="splice variant" id="VSP_054780" description="In isoform 5." evidence="11">
    <location>
        <begin position="1"/>
        <end position="103"/>
    </location>
</feature>
<feature type="splice variant" id="VSP_057346" description="In isoform 6." evidence="11">
    <location>
        <begin position="110"/>
        <end position="158"/>
    </location>
</feature>
<feature type="splice variant" id="VSP_011398" description="In isoform 2, isoform 3, isoform 4 and isoform 6." evidence="11 12">
    <original>Q</original>
    <variation>QS</variation>
    <location>
        <position position="234"/>
    </location>
</feature>
<feature type="splice variant" id="VSP_011399" description="In isoform 3." evidence="11">
    <original>Q</original>
    <variation>QGSTCASLQ</variation>
    <location>
        <position position="251"/>
    </location>
</feature>
<feature type="mutagenesis site" description="Abolishes cleavage by caspase-3." evidence="10">
    <original>D</original>
    <variation>A</variation>
    <location>
        <position position="361"/>
    </location>
</feature>
<feature type="sequence conflict" description="In Ref. 4; AAG17262." evidence="13" ref="4">
    <original>N</original>
    <variation>K</variation>
    <location>
        <position position="8"/>
    </location>
</feature>
<feature type="sequence conflict" description="In Ref. 3; AAF81273/AAG13120." evidence="13" ref="3">
    <original>A</original>
    <variation>S</variation>
    <location>
        <position position="98"/>
    </location>
</feature>
<feature type="sequence conflict" description="In Ref. 3; AAF81273/AAG13120." evidence="13" ref="3">
    <original>R</original>
    <variation>S</variation>
    <location>
        <position position="235"/>
    </location>
</feature>
<feature type="sequence conflict" description="In Ref. 6; CAG33448." evidence="13" ref="6">
    <original>E</original>
    <variation>D</variation>
    <location>
        <position position="430"/>
    </location>
</feature>
<feature type="helix" evidence="25">
    <location>
        <begin position="9"/>
        <end position="20"/>
    </location>
</feature>
<feature type="strand" evidence="25">
    <location>
        <begin position="22"/>
        <end position="25"/>
    </location>
</feature>
<feature type="strand" evidence="25">
    <location>
        <begin position="27"/>
        <end position="38"/>
    </location>
</feature>
<feature type="strand" evidence="25">
    <location>
        <begin position="40"/>
        <end position="48"/>
    </location>
</feature>
<feature type="helix" evidence="25">
    <location>
        <begin position="50"/>
        <end position="56"/>
    </location>
</feature>
<feature type="strand" evidence="25">
    <location>
        <begin position="61"/>
        <end position="70"/>
    </location>
</feature>
<feature type="strand" evidence="25">
    <location>
        <begin position="72"/>
        <end position="74"/>
    </location>
</feature>
<feature type="strand" evidence="25">
    <location>
        <begin position="76"/>
        <end position="85"/>
    </location>
</feature>
<feature type="helix" evidence="25">
    <location>
        <begin position="91"/>
        <end position="107"/>
    </location>
</feature>
<feature type="turn" evidence="25">
    <location>
        <begin position="108"/>
        <end position="110"/>
    </location>
</feature>
<feature type="strand" evidence="25">
    <location>
        <begin position="111"/>
        <end position="115"/>
    </location>
</feature>
<feature type="helix" evidence="25">
    <location>
        <begin position="120"/>
        <end position="123"/>
    </location>
</feature>
<feature type="helix" evidence="25">
    <location>
        <begin position="125"/>
        <end position="133"/>
    </location>
</feature>
<feature type="modified residue" description="Phosphoserine" evidence="15 21">
    <location sequence="Q9UJU6-2">
        <position position="232"/>
    </location>
</feature>
<feature type="modified residue" description="Phosphoserine" evidence="15 21">
    <location sequence="Q9UJU6-3">
        <position position="232"/>
    </location>
</feature>
<feature type="modified residue" description="Phosphoserine" evidence="15 21">
    <location sequence="Q9UJU6-4">
        <position position="137"/>
    </location>
</feature>
<feature type="modified residue" description="Phosphoserine" evidence="15 21">
    <location sequence="Q9UJU6-6">
        <position position="183"/>
    </location>
</feature>